<name>YP010_HUMAN</name>
<keyword id="KW-1185">Reference proteome</keyword>
<dbReference type="EMBL" id="AK057352">
    <property type="protein sequence ID" value="BAB71444.1"/>
    <property type="molecule type" value="mRNA"/>
</dbReference>
<dbReference type="EMBL" id="AC007601">
    <property type="status" value="NOT_ANNOTATED_CDS"/>
    <property type="molecule type" value="Genomic_DNA"/>
</dbReference>
<dbReference type="BioMuta" id="-"/>
<dbReference type="DMDM" id="172045862"/>
<dbReference type="neXtProt" id="NX_Q96M66"/>
<dbReference type="InParanoid" id="Q96M66"/>
<dbReference type="PAN-GO" id="Q96M66">
    <property type="GO annotations" value="0 GO annotations based on evolutionary models"/>
</dbReference>
<dbReference type="PhylomeDB" id="Q96M66"/>
<dbReference type="Pharos" id="Q96M66">
    <property type="development level" value="Tdark"/>
</dbReference>
<dbReference type="Proteomes" id="UP000005640">
    <property type="component" value="Unplaced"/>
</dbReference>
<dbReference type="RNAct" id="Q96M66">
    <property type="molecule type" value="protein"/>
</dbReference>
<organism>
    <name type="scientific">Homo sapiens</name>
    <name type="common">Human</name>
    <dbReference type="NCBI Taxonomy" id="9606"/>
    <lineage>
        <taxon>Eukaryota</taxon>
        <taxon>Metazoa</taxon>
        <taxon>Chordata</taxon>
        <taxon>Craniata</taxon>
        <taxon>Vertebrata</taxon>
        <taxon>Euteleostomi</taxon>
        <taxon>Mammalia</taxon>
        <taxon>Eutheria</taxon>
        <taxon>Euarchontoglires</taxon>
        <taxon>Primates</taxon>
        <taxon>Haplorrhini</taxon>
        <taxon>Catarrhini</taxon>
        <taxon>Hominidae</taxon>
        <taxon>Homo</taxon>
    </lineage>
</organism>
<reference key="1">
    <citation type="journal article" date="2004" name="Nat. Genet.">
        <title>Complete sequencing and characterization of 21,243 full-length human cDNAs.</title>
        <authorList>
            <person name="Ota T."/>
            <person name="Suzuki Y."/>
            <person name="Nishikawa T."/>
            <person name="Otsuki T."/>
            <person name="Sugiyama T."/>
            <person name="Irie R."/>
            <person name="Wakamatsu A."/>
            <person name="Hayashi K."/>
            <person name="Sato H."/>
            <person name="Nagai K."/>
            <person name="Kimura K."/>
            <person name="Makita H."/>
            <person name="Sekine M."/>
            <person name="Obayashi M."/>
            <person name="Nishi T."/>
            <person name="Shibahara T."/>
            <person name="Tanaka T."/>
            <person name="Ishii S."/>
            <person name="Yamamoto J."/>
            <person name="Saito K."/>
            <person name="Kawai Y."/>
            <person name="Isono Y."/>
            <person name="Nakamura Y."/>
            <person name="Nagahari K."/>
            <person name="Murakami K."/>
            <person name="Yasuda T."/>
            <person name="Iwayanagi T."/>
            <person name="Wagatsuma M."/>
            <person name="Shiratori A."/>
            <person name="Sudo H."/>
            <person name="Hosoiri T."/>
            <person name="Kaku Y."/>
            <person name="Kodaira H."/>
            <person name="Kondo H."/>
            <person name="Sugawara M."/>
            <person name="Takahashi M."/>
            <person name="Kanda K."/>
            <person name="Yokoi T."/>
            <person name="Furuya T."/>
            <person name="Kikkawa E."/>
            <person name="Omura Y."/>
            <person name="Abe K."/>
            <person name="Kamihara K."/>
            <person name="Katsuta N."/>
            <person name="Sato K."/>
            <person name="Tanikawa M."/>
            <person name="Yamazaki M."/>
            <person name="Ninomiya K."/>
            <person name="Ishibashi T."/>
            <person name="Yamashita H."/>
            <person name="Murakawa K."/>
            <person name="Fujimori K."/>
            <person name="Tanai H."/>
            <person name="Kimata M."/>
            <person name="Watanabe M."/>
            <person name="Hiraoka S."/>
            <person name="Chiba Y."/>
            <person name="Ishida S."/>
            <person name="Ono Y."/>
            <person name="Takiguchi S."/>
            <person name="Watanabe S."/>
            <person name="Yosida M."/>
            <person name="Hotuta T."/>
            <person name="Kusano J."/>
            <person name="Kanehori K."/>
            <person name="Takahashi-Fujii A."/>
            <person name="Hara H."/>
            <person name="Tanase T.-O."/>
            <person name="Nomura Y."/>
            <person name="Togiya S."/>
            <person name="Komai F."/>
            <person name="Hara R."/>
            <person name="Takeuchi K."/>
            <person name="Arita M."/>
            <person name="Imose N."/>
            <person name="Musashino K."/>
            <person name="Yuuki H."/>
            <person name="Oshima A."/>
            <person name="Sasaki N."/>
            <person name="Aotsuka S."/>
            <person name="Yoshikawa Y."/>
            <person name="Matsunawa H."/>
            <person name="Ichihara T."/>
            <person name="Shiohata N."/>
            <person name="Sano S."/>
            <person name="Moriya S."/>
            <person name="Momiyama H."/>
            <person name="Satoh N."/>
            <person name="Takami S."/>
            <person name="Terashima Y."/>
            <person name="Suzuki O."/>
            <person name="Nakagawa S."/>
            <person name="Senoh A."/>
            <person name="Mizoguchi H."/>
            <person name="Goto Y."/>
            <person name="Shimizu F."/>
            <person name="Wakebe H."/>
            <person name="Hishigaki H."/>
            <person name="Watanabe T."/>
            <person name="Sugiyama A."/>
            <person name="Takemoto M."/>
            <person name="Kawakami B."/>
            <person name="Yamazaki M."/>
            <person name="Watanabe K."/>
            <person name="Kumagai A."/>
            <person name="Itakura S."/>
            <person name="Fukuzumi Y."/>
            <person name="Fujimori Y."/>
            <person name="Komiyama M."/>
            <person name="Tashiro H."/>
            <person name="Tanigami A."/>
            <person name="Fujiwara T."/>
            <person name="Ono T."/>
            <person name="Yamada K."/>
            <person name="Fujii Y."/>
            <person name="Ozaki K."/>
            <person name="Hirao M."/>
            <person name="Ohmori Y."/>
            <person name="Kawabata A."/>
            <person name="Hikiji T."/>
            <person name="Kobatake N."/>
            <person name="Inagaki H."/>
            <person name="Ikema Y."/>
            <person name="Okamoto S."/>
            <person name="Okitani R."/>
            <person name="Kawakami T."/>
            <person name="Noguchi S."/>
            <person name="Itoh T."/>
            <person name="Shigeta K."/>
            <person name="Senba T."/>
            <person name="Matsumura K."/>
            <person name="Nakajima Y."/>
            <person name="Mizuno T."/>
            <person name="Morinaga M."/>
            <person name="Sasaki M."/>
            <person name="Togashi T."/>
            <person name="Oyama M."/>
            <person name="Hata H."/>
            <person name="Watanabe M."/>
            <person name="Komatsu T."/>
            <person name="Mizushima-Sugano J."/>
            <person name="Satoh T."/>
            <person name="Shirai Y."/>
            <person name="Takahashi Y."/>
            <person name="Nakagawa K."/>
            <person name="Okumura K."/>
            <person name="Nagase T."/>
            <person name="Nomura N."/>
            <person name="Kikuchi H."/>
            <person name="Masuho Y."/>
            <person name="Yamashita R."/>
            <person name="Nakai K."/>
            <person name="Yada T."/>
            <person name="Nakamura Y."/>
            <person name="Ohara O."/>
            <person name="Isogai T."/>
            <person name="Sugano S."/>
        </authorList>
    </citation>
    <scope>NUCLEOTIDE SEQUENCE [LARGE SCALE MRNA]</scope>
    <scope>VARIANT SER-171</scope>
    <source>
        <tissue>Testis</tissue>
    </source>
</reference>
<reference key="2">
    <citation type="journal article" date="2004" name="Nature">
        <title>The sequence and analysis of duplication-rich human chromosome 16.</title>
        <authorList>
            <person name="Martin J."/>
            <person name="Han C."/>
            <person name="Gordon L.A."/>
            <person name="Terry A."/>
            <person name="Prabhakar S."/>
            <person name="She X."/>
            <person name="Xie G."/>
            <person name="Hellsten U."/>
            <person name="Chan Y.M."/>
            <person name="Altherr M."/>
            <person name="Couronne O."/>
            <person name="Aerts A."/>
            <person name="Bajorek E."/>
            <person name="Black S."/>
            <person name="Blumer H."/>
            <person name="Branscomb E."/>
            <person name="Brown N.C."/>
            <person name="Bruno W.J."/>
            <person name="Buckingham J.M."/>
            <person name="Callen D.F."/>
            <person name="Campbell C.S."/>
            <person name="Campbell M.L."/>
            <person name="Campbell E.W."/>
            <person name="Caoile C."/>
            <person name="Challacombe J.F."/>
            <person name="Chasteen L.A."/>
            <person name="Chertkov O."/>
            <person name="Chi H.C."/>
            <person name="Christensen M."/>
            <person name="Clark L.M."/>
            <person name="Cohn J.D."/>
            <person name="Denys M."/>
            <person name="Detter J.C."/>
            <person name="Dickson M."/>
            <person name="Dimitrijevic-Bussod M."/>
            <person name="Escobar J."/>
            <person name="Fawcett J.J."/>
            <person name="Flowers D."/>
            <person name="Fotopulos D."/>
            <person name="Glavina T."/>
            <person name="Gomez M."/>
            <person name="Gonzales E."/>
            <person name="Goodstein D."/>
            <person name="Goodwin L.A."/>
            <person name="Grady D.L."/>
            <person name="Grigoriev I."/>
            <person name="Groza M."/>
            <person name="Hammon N."/>
            <person name="Hawkins T."/>
            <person name="Haydu L."/>
            <person name="Hildebrand C.E."/>
            <person name="Huang W."/>
            <person name="Israni S."/>
            <person name="Jett J."/>
            <person name="Jewett P.B."/>
            <person name="Kadner K."/>
            <person name="Kimball H."/>
            <person name="Kobayashi A."/>
            <person name="Krawczyk M.-C."/>
            <person name="Leyba T."/>
            <person name="Longmire J.L."/>
            <person name="Lopez F."/>
            <person name="Lou Y."/>
            <person name="Lowry S."/>
            <person name="Ludeman T."/>
            <person name="Manohar C.F."/>
            <person name="Mark G.A."/>
            <person name="McMurray K.L."/>
            <person name="Meincke L.J."/>
            <person name="Morgan J."/>
            <person name="Moyzis R.K."/>
            <person name="Mundt M.O."/>
            <person name="Munk A.C."/>
            <person name="Nandkeshwar R.D."/>
            <person name="Pitluck S."/>
            <person name="Pollard M."/>
            <person name="Predki P."/>
            <person name="Parson-Quintana B."/>
            <person name="Ramirez L."/>
            <person name="Rash S."/>
            <person name="Retterer J."/>
            <person name="Ricke D.O."/>
            <person name="Robinson D.L."/>
            <person name="Rodriguez A."/>
            <person name="Salamov A."/>
            <person name="Saunders E.H."/>
            <person name="Scott D."/>
            <person name="Shough T."/>
            <person name="Stallings R.L."/>
            <person name="Stalvey M."/>
            <person name="Sutherland R.D."/>
            <person name="Tapia R."/>
            <person name="Tesmer J.G."/>
            <person name="Thayer N."/>
            <person name="Thompson L.S."/>
            <person name="Tice H."/>
            <person name="Torney D.C."/>
            <person name="Tran-Gyamfi M."/>
            <person name="Tsai M."/>
            <person name="Ulanovsky L.E."/>
            <person name="Ustaszewska A."/>
            <person name="Vo N."/>
            <person name="White P.S."/>
            <person name="Williams A.L."/>
            <person name="Wills P.L."/>
            <person name="Wu J.-R."/>
            <person name="Wu K."/>
            <person name="Yang J."/>
            <person name="DeJong P."/>
            <person name="Bruce D."/>
            <person name="Doggett N.A."/>
            <person name="Deaven L."/>
            <person name="Schmutz J."/>
            <person name="Grimwood J."/>
            <person name="Richardson P."/>
            <person name="Rokhsar D.S."/>
            <person name="Eichler E.E."/>
            <person name="Gilna P."/>
            <person name="Lucas S.M."/>
            <person name="Myers R.M."/>
            <person name="Rubin E.M."/>
            <person name="Pennacchio L.A."/>
        </authorList>
    </citation>
    <scope>NUCLEOTIDE SEQUENCE [LARGE SCALE GENOMIC DNA]</scope>
</reference>
<protein>
    <recommendedName>
        <fullName>Putative uncharacterized protein FLJ32790</fullName>
    </recommendedName>
</protein>
<evidence type="ECO:0000256" key="1">
    <source>
        <dbReference type="SAM" id="MobiDB-lite"/>
    </source>
</evidence>
<evidence type="ECO:0000269" key="2">
    <source>
    </source>
</evidence>
<sequence>MAAKSTQDSLPRDTGEPSALPVQGRAEGRSSEGRKERTAECALRGKQASEPALRKRNFLPGPNSDTVRPAAETELVPCSLRHPRQDLCGEHPSFPVMQPSLETQAKPERDRAVLIPPKGPWPPAQGLAMRTHCPTGPPSKAYCRGGSSSTSRNQVASLAYRTQNTAASQPRQPGGRGKEDTAGYGSCSPRSLAV</sequence>
<accession>Q96M66</accession>
<feature type="chain" id="PRO_0000320247" description="Putative uncharacterized protein FLJ32790">
    <location>
        <begin position="1"/>
        <end position="194"/>
    </location>
</feature>
<feature type="region of interest" description="Disordered" evidence="1">
    <location>
        <begin position="1"/>
        <end position="72"/>
    </location>
</feature>
<feature type="region of interest" description="Disordered" evidence="1">
    <location>
        <begin position="113"/>
        <end position="194"/>
    </location>
</feature>
<feature type="compositionally biased region" description="Basic and acidic residues" evidence="1">
    <location>
        <begin position="26"/>
        <end position="39"/>
    </location>
</feature>
<feature type="compositionally biased region" description="Polar residues" evidence="1">
    <location>
        <begin position="146"/>
        <end position="171"/>
    </location>
</feature>
<feature type="sequence variant" id="VAR_039178" description="In dbSNP:rs350229.">
    <original>R</original>
    <variation>H</variation>
    <location>
        <position position="37"/>
    </location>
</feature>
<feature type="sequence variant" id="VAR_039179" description="In dbSNP:rs11648228." evidence="2">
    <original>R</original>
    <variation>S</variation>
    <location>
        <position position="171"/>
    </location>
</feature>
<proteinExistence type="evidence at transcript level"/>